<feature type="chain" id="PRO_0000321568" description="N-alpha-acetyltransferase 60">
    <location>
        <begin position="1"/>
        <end position="242"/>
    </location>
</feature>
<feature type="topological domain" description="Cytoplasmic" evidence="1">
    <location>
        <begin position="1"/>
        <end position="192"/>
    </location>
</feature>
<feature type="intramembrane region" description="Helical" evidence="1">
    <location>
        <begin position="193"/>
        <end position="236"/>
    </location>
</feature>
<feature type="topological domain" description="Cytoplasmic" evidence="1">
    <location>
        <begin position="237"/>
        <end position="242"/>
    </location>
</feature>
<feature type="domain" description="N-acetyltransferase" evidence="2">
    <location>
        <begin position="13"/>
        <end position="182"/>
    </location>
</feature>
<feature type="region of interest" description="Required for homodimerization" evidence="1">
    <location>
        <begin position="162"/>
        <end position="173"/>
    </location>
</feature>
<feature type="active site" evidence="1">
    <location>
        <position position="97"/>
    </location>
</feature>
<feature type="active site" evidence="1">
    <location>
        <position position="138"/>
    </location>
</feature>
<feature type="binding site" evidence="1">
    <location>
        <position position="38"/>
    </location>
    <ligand>
        <name>substrate</name>
    </ligand>
</feature>
<feature type="binding site" evidence="1">
    <location>
        <position position="99"/>
    </location>
    <ligand>
        <name>substrate</name>
    </ligand>
</feature>
<feature type="binding site" evidence="1">
    <location>
        <begin position="101"/>
        <end position="103"/>
    </location>
    <ligand>
        <name>acetyl-CoA</name>
        <dbReference type="ChEBI" id="CHEBI:57288"/>
    </ligand>
</feature>
<feature type="binding site" evidence="1">
    <location>
        <begin position="109"/>
        <end position="114"/>
    </location>
    <ligand>
        <name>acetyl-CoA</name>
        <dbReference type="ChEBI" id="CHEBI:57288"/>
    </ligand>
</feature>
<feature type="binding site" evidence="1">
    <location>
        <position position="143"/>
    </location>
    <ligand>
        <name>acetyl-CoA</name>
        <dbReference type="ChEBI" id="CHEBI:57288"/>
    </ligand>
</feature>
<feature type="binding site" evidence="1">
    <location>
        <begin position="150"/>
        <end position="153"/>
    </location>
    <ligand>
        <name>acetyl-CoA</name>
        <dbReference type="ChEBI" id="CHEBI:57288"/>
    </ligand>
</feature>
<feature type="binding site" evidence="1">
    <location>
        <position position="165"/>
    </location>
    <ligand>
        <name>substrate</name>
    </ligand>
</feature>
<feature type="modified residue" description="N6-acetyllysine; by autocatalysis" evidence="1">
    <location>
        <position position="79"/>
    </location>
</feature>
<feature type="modified residue" description="N6-acetyllysine; by autocatalysis" evidence="1">
    <location>
        <position position="105"/>
    </location>
</feature>
<feature type="modified residue" description="N6-acetyllysine; by autocatalysis" evidence="1">
    <location>
        <position position="109"/>
    </location>
</feature>
<feature type="modified residue" description="N6-acetyllysine; by autocatalysis" evidence="1">
    <location>
        <position position="121"/>
    </location>
</feature>
<feature type="sequence conflict" description="In Ref. 1; AAP83441." evidence="3" ref="1">
    <original>S</original>
    <variation>T</variation>
    <location>
        <position position="232"/>
    </location>
</feature>
<comment type="function">
    <text evidence="1">N-alpha-acetyltransferase that specifically mediates the acetylation of N-terminal residues of the transmembrane proteins, with a strong preference for N-termini facing the cytosol. Displays N-terminal acetyltransferase activity towards a range of N-terminal sequences including those starting with Met-Lys, Met-Val, Met-Ala and Met-Met. Required for normal chromosomal segregation during anaphase. May also show histone acetyltransferase activity; such results are however unclear in vivo and would require additional experimental evidences.</text>
</comment>
<comment type="catalytic activity">
    <reaction evidence="1">
        <text>N-terminal L-methionyl-[transmembrane protein] + acetyl-CoA = N-terminal N(alpha)-acetyl-L-methionyl-[transmembrane protein] + CoA + H(+)</text>
        <dbReference type="Rhea" id="RHEA:50604"/>
        <dbReference type="Rhea" id="RHEA-COMP:12745"/>
        <dbReference type="Rhea" id="RHEA-COMP:12746"/>
        <dbReference type="ChEBI" id="CHEBI:15378"/>
        <dbReference type="ChEBI" id="CHEBI:57287"/>
        <dbReference type="ChEBI" id="CHEBI:57288"/>
        <dbReference type="ChEBI" id="CHEBI:64731"/>
        <dbReference type="ChEBI" id="CHEBI:133414"/>
        <dbReference type="EC" id="2.3.1.259"/>
    </reaction>
</comment>
<comment type="catalytic activity">
    <reaction evidence="1">
        <text>L-lysyl-[protein] + acetyl-CoA = N(6)-acetyl-L-lysyl-[protein] + CoA + H(+)</text>
        <dbReference type="Rhea" id="RHEA:45948"/>
        <dbReference type="Rhea" id="RHEA-COMP:9752"/>
        <dbReference type="Rhea" id="RHEA-COMP:10731"/>
        <dbReference type="ChEBI" id="CHEBI:15378"/>
        <dbReference type="ChEBI" id="CHEBI:29969"/>
        <dbReference type="ChEBI" id="CHEBI:57287"/>
        <dbReference type="ChEBI" id="CHEBI:57288"/>
        <dbReference type="ChEBI" id="CHEBI:61930"/>
        <dbReference type="EC" id="2.3.1.48"/>
    </reaction>
</comment>
<comment type="subunit">
    <text evidence="1">Monomer and homodimer; monomer in presence of substrate and homodimer in its absence.</text>
</comment>
<comment type="subcellular location">
    <subcellularLocation>
        <location evidence="1">Golgi apparatus membrane</location>
        <topology evidence="1">Peripheral membrane protein</topology>
        <orientation evidence="1">Cytoplasmic side</orientation>
    </subcellularLocation>
    <text evidence="1">Probably forms a intramembrane hairpin-like structure in the membrane.</text>
</comment>
<comment type="PTM">
    <text evidence="1">Acetylated: autoacetylation is required for optimal acetyltransferase activity.</text>
</comment>
<comment type="similarity">
    <text evidence="3">Belongs to the acetyltransferase family. NAA60 subfamily.</text>
</comment>
<sequence>MTEVVPSSALSEVSLRLLCHDDIDTVKHLCGDWFPIEYPDSWYRDITSNKKFFSLAATYRGAIVGMIVAEIKNRTKIHKEDGDILASSFSVDTQVAYILSLGVVKEFRKHGIGSLLLESLKDHISTTAQDHCKAIYLHVLTTNNTAINFYENRDFRQHHYLPYYYSIRGVLKDGFTYVLYINGGHPPWTILDYIQHLGSALANLSPCSIPHRIYRQAHSLLCSFLPWSSISSKGGIEYSRTM</sequence>
<protein>
    <recommendedName>
        <fullName>N-alpha-acetyltransferase 60</fullName>
        <ecNumber evidence="1">2.3.1.259</ecNumber>
    </recommendedName>
    <alternativeName>
        <fullName evidence="1">Histone acetyltransferase type B protein 4</fullName>
        <shortName evidence="1">HAT4</shortName>
        <ecNumber evidence="1">2.3.1.48</ecNumber>
    </alternativeName>
    <alternativeName>
        <fullName>N-acetyltransferase 15</fullName>
    </alternativeName>
    <alternativeName>
        <fullName>N-alpha-acetyltransferase F</fullName>
        <shortName>NatF</shortName>
    </alternativeName>
</protein>
<keyword id="KW-0007">Acetylation</keyword>
<keyword id="KW-0012">Acyltransferase</keyword>
<keyword id="KW-0156">Chromatin regulator</keyword>
<keyword id="KW-0159">Chromosome partition</keyword>
<keyword id="KW-0333">Golgi apparatus</keyword>
<keyword id="KW-0472">Membrane</keyword>
<keyword id="KW-1185">Reference proteome</keyword>
<keyword id="KW-0808">Transferase</keyword>
<gene>
    <name type="primary">Naa60</name>
    <name type="synonym">Nat15</name>
</gene>
<name>NAA60_RAT</name>
<dbReference type="EC" id="2.3.1.259" evidence="1"/>
<dbReference type="EC" id="2.3.1.48" evidence="1"/>
<dbReference type="EMBL" id="AY316589">
    <property type="protein sequence ID" value="AAP83441.1"/>
    <property type="molecule type" value="mRNA"/>
</dbReference>
<dbReference type="EMBL" id="BC105304">
    <property type="protein sequence ID" value="AAI05305.1"/>
    <property type="molecule type" value="mRNA"/>
</dbReference>
<dbReference type="RefSeq" id="NP_001014248.2">
    <property type="nucleotide sequence ID" value="NM_001014226.2"/>
</dbReference>
<dbReference type="SMR" id="Q3MHC1"/>
<dbReference type="FunCoup" id="Q3MHC1">
    <property type="interactions" value="3374"/>
</dbReference>
<dbReference type="STRING" id="10116.ENSRNOP00000009936"/>
<dbReference type="PhosphoSitePlus" id="Q3MHC1"/>
<dbReference type="PaxDb" id="10116-ENSRNOP00000009936"/>
<dbReference type="Ensembl" id="ENSRNOT00000009936.7">
    <property type="protein sequence ID" value="ENSRNOP00000009936.3"/>
    <property type="gene ID" value="ENSRNOG00000007280.8"/>
</dbReference>
<dbReference type="GeneID" id="363545"/>
<dbReference type="KEGG" id="rno:363545"/>
<dbReference type="UCSC" id="RGD:1308915">
    <property type="organism name" value="rat"/>
</dbReference>
<dbReference type="AGR" id="RGD:1308915"/>
<dbReference type="CTD" id="79903"/>
<dbReference type="RGD" id="1308915">
    <property type="gene designation" value="Naa60"/>
</dbReference>
<dbReference type="eggNOG" id="KOG3138">
    <property type="taxonomic scope" value="Eukaryota"/>
</dbReference>
<dbReference type="GeneTree" id="ENSGT00390000008314"/>
<dbReference type="HOGENOM" id="CLU_013985_5_4_1"/>
<dbReference type="InParanoid" id="Q3MHC1"/>
<dbReference type="OMA" id="IHFYKKM"/>
<dbReference type="OrthoDB" id="47017at2759"/>
<dbReference type="PhylomeDB" id="Q3MHC1"/>
<dbReference type="TreeFam" id="TF323980"/>
<dbReference type="PRO" id="PR:Q3MHC1"/>
<dbReference type="Proteomes" id="UP000002494">
    <property type="component" value="Chromosome 10"/>
</dbReference>
<dbReference type="Bgee" id="ENSRNOG00000007280">
    <property type="expression patterns" value="Expressed in liver and 19 other cell types or tissues"/>
</dbReference>
<dbReference type="GO" id="GO:0000139">
    <property type="term" value="C:Golgi membrane"/>
    <property type="evidence" value="ECO:0000250"/>
    <property type="project" value="UniProtKB"/>
</dbReference>
<dbReference type="GO" id="GO:0004402">
    <property type="term" value="F:histone acetyltransferase activity"/>
    <property type="evidence" value="ECO:0000318"/>
    <property type="project" value="GO_Central"/>
</dbReference>
<dbReference type="GO" id="GO:0010485">
    <property type="term" value="F:histone H4 acetyltransferase activity"/>
    <property type="evidence" value="ECO:0000250"/>
    <property type="project" value="UniProtKB"/>
</dbReference>
<dbReference type="GO" id="GO:0042803">
    <property type="term" value="F:protein homodimerization activity"/>
    <property type="evidence" value="ECO:0000250"/>
    <property type="project" value="UniProtKB"/>
</dbReference>
<dbReference type="GO" id="GO:0120518">
    <property type="term" value="F:protein N-terminal-methionine acetyltransferase activity"/>
    <property type="evidence" value="ECO:0007669"/>
    <property type="project" value="UniProtKB-EC"/>
</dbReference>
<dbReference type="GO" id="GO:0004596">
    <property type="term" value="F:protein-N-terminal amino-acid acetyltransferase activity"/>
    <property type="evidence" value="ECO:0000250"/>
    <property type="project" value="UniProtKB"/>
</dbReference>
<dbReference type="GO" id="GO:0008283">
    <property type="term" value="P:cell population proliferation"/>
    <property type="evidence" value="ECO:0000250"/>
    <property type="project" value="UniProtKB"/>
</dbReference>
<dbReference type="GO" id="GO:0007059">
    <property type="term" value="P:chromosome segregation"/>
    <property type="evidence" value="ECO:0000250"/>
    <property type="project" value="UniProtKB"/>
</dbReference>
<dbReference type="GO" id="GO:0017196">
    <property type="term" value="P:N-terminal peptidyl-methionine acetylation"/>
    <property type="evidence" value="ECO:0000250"/>
    <property type="project" value="UniProtKB"/>
</dbReference>
<dbReference type="GO" id="GO:0006474">
    <property type="term" value="P:N-terminal protein amino acid acetylation"/>
    <property type="evidence" value="ECO:0000250"/>
    <property type="project" value="UniProtKB"/>
</dbReference>
<dbReference type="GO" id="GO:0006334">
    <property type="term" value="P:nucleosome assembly"/>
    <property type="evidence" value="ECO:0000250"/>
    <property type="project" value="UniProtKB"/>
</dbReference>
<dbReference type="CDD" id="cd04301">
    <property type="entry name" value="NAT_SF"/>
    <property type="match status" value="1"/>
</dbReference>
<dbReference type="FunFam" id="3.40.630.30:FF:000028">
    <property type="entry name" value="N-alpha-acetyltransferase 60 isoform X1"/>
    <property type="match status" value="1"/>
</dbReference>
<dbReference type="Gene3D" id="3.40.630.30">
    <property type="match status" value="1"/>
</dbReference>
<dbReference type="InterPro" id="IPR016181">
    <property type="entry name" value="Acyl_CoA_acyltransferase"/>
</dbReference>
<dbReference type="InterPro" id="IPR000182">
    <property type="entry name" value="GNAT_dom"/>
</dbReference>
<dbReference type="InterPro" id="IPR045141">
    <property type="entry name" value="NAA60-like"/>
</dbReference>
<dbReference type="PANTHER" id="PTHR14744">
    <property type="entry name" value="N-ALPHA-ACETYLTRANSFERASE 60"/>
    <property type="match status" value="1"/>
</dbReference>
<dbReference type="PANTHER" id="PTHR14744:SF15">
    <property type="entry name" value="N-ALPHA-ACETYLTRANSFERASE 60"/>
    <property type="match status" value="1"/>
</dbReference>
<dbReference type="Pfam" id="PF00583">
    <property type="entry name" value="Acetyltransf_1"/>
    <property type="match status" value="1"/>
</dbReference>
<dbReference type="SUPFAM" id="SSF55729">
    <property type="entry name" value="Acyl-CoA N-acyltransferases (Nat)"/>
    <property type="match status" value="1"/>
</dbReference>
<dbReference type="PROSITE" id="PS51186">
    <property type="entry name" value="GNAT"/>
    <property type="match status" value="1"/>
</dbReference>
<accession>Q3MHC1</accession>
<accession>Q7TMZ6</accession>
<evidence type="ECO:0000250" key="1">
    <source>
        <dbReference type="UniProtKB" id="Q9H7X0"/>
    </source>
</evidence>
<evidence type="ECO:0000255" key="2">
    <source>
        <dbReference type="PROSITE-ProRule" id="PRU00532"/>
    </source>
</evidence>
<evidence type="ECO:0000305" key="3"/>
<organism>
    <name type="scientific">Rattus norvegicus</name>
    <name type="common">Rat</name>
    <dbReference type="NCBI Taxonomy" id="10116"/>
    <lineage>
        <taxon>Eukaryota</taxon>
        <taxon>Metazoa</taxon>
        <taxon>Chordata</taxon>
        <taxon>Craniata</taxon>
        <taxon>Vertebrata</taxon>
        <taxon>Euteleostomi</taxon>
        <taxon>Mammalia</taxon>
        <taxon>Eutheria</taxon>
        <taxon>Euarchontoglires</taxon>
        <taxon>Glires</taxon>
        <taxon>Rodentia</taxon>
        <taxon>Myomorpha</taxon>
        <taxon>Muroidea</taxon>
        <taxon>Muridae</taxon>
        <taxon>Murinae</taxon>
        <taxon>Rattus</taxon>
    </lineage>
</organism>
<reference key="1">
    <citation type="submission" date="2003-06" db="EMBL/GenBank/DDBJ databases">
        <title>GNAT family mRNA in the developing rat ovary.</title>
        <authorList>
            <person name="Luna F."/>
            <person name="de la Chesnaye E."/>
            <person name="Ojeda S.R."/>
        </authorList>
    </citation>
    <scope>NUCLEOTIDE SEQUENCE [MRNA]</scope>
    <source>
        <strain>Sprague-Dawley</strain>
        <tissue>Ovary</tissue>
    </source>
</reference>
<reference key="2">
    <citation type="journal article" date="2004" name="Genome Res.">
        <title>The status, quality, and expansion of the NIH full-length cDNA project: the Mammalian Gene Collection (MGC).</title>
        <authorList>
            <consortium name="The MGC Project Team"/>
        </authorList>
    </citation>
    <scope>NUCLEOTIDE SEQUENCE [LARGE SCALE MRNA]</scope>
    <source>
        <tissue>Heart</tissue>
    </source>
</reference>
<proteinExistence type="evidence at transcript level"/>